<accession>Q9RWN9</accession>
<reference key="1">
    <citation type="journal article" date="1999" name="Science">
        <title>Genome sequence of the radioresistant bacterium Deinococcus radiodurans R1.</title>
        <authorList>
            <person name="White O."/>
            <person name="Eisen J.A."/>
            <person name="Heidelberg J.F."/>
            <person name="Hickey E.K."/>
            <person name="Peterson J.D."/>
            <person name="Dodson R.J."/>
            <person name="Haft D.H."/>
            <person name="Gwinn M.L."/>
            <person name="Nelson W.C."/>
            <person name="Richardson D.L."/>
            <person name="Moffat K.S."/>
            <person name="Qin H."/>
            <person name="Jiang L."/>
            <person name="Pamphile W."/>
            <person name="Crosby M."/>
            <person name="Shen M."/>
            <person name="Vamathevan J.J."/>
            <person name="Lam P."/>
            <person name="McDonald L.A."/>
            <person name="Utterback T.R."/>
            <person name="Zalewski C."/>
            <person name="Makarova K.S."/>
            <person name="Aravind L."/>
            <person name="Daly M.J."/>
            <person name="Minton K.W."/>
            <person name="Fleischmann R.D."/>
            <person name="Ketchum K.A."/>
            <person name="Nelson K.E."/>
            <person name="Salzberg S.L."/>
            <person name="Smith H.O."/>
            <person name="Venter J.C."/>
            <person name="Fraser C.M."/>
        </authorList>
    </citation>
    <scope>NUCLEOTIDE SEQUENCE [LARGE SCALE GENOMIC DNA]</scope>
    <source>
        <strain>ATCC 13939 / DSM 20539 / JCM 16871 / CCUG 27074 / LMG 4051 / NBRC 15346 / NCIMB 9279 / VKM B-1422 / R1</strain>
    </source>
</reference>
<gene>
    <name evidence="1" type="primary">murC</name>
    <name type="ordered locus">DR_0627</name>
</gene>
<name>MURC_DEIRA</name>
<comment type="function">
    <text evidence="1">Cell wall formation.</text>
</comment>
<comment type="catalytic activity">
    <reaction evidence="1">
        <text>UDP-N-acetyl-alpha-D-muramate + L-alanine + ATP = UDP-N-acetyl-alpha-D-muramoyl-L-alanine + ADP + phosphate + H(+)</text>
        <dbReference type="Rhea" id="RHEA:23372"/>
        <dbReference type="ChEBI" id="CHEBI:15378"/>
        <dbReference type="ChEBI" id="CHEBI:30616"/>
        <dbReference type="ChEBI" id="CHEBI:43474"/>
        <dbReference type="ChEBI" id="CHEBI:57972"/>
        <dbReference type="ChEBI" id="CHEBI:70757"/>
        <dbReference type="ChEBI" id="CHEBI:83898"/>
        <dbReference type="ChEBI" id="CHEBI:456216"/>
        <dbReference type="EC" id="6.3.2.8"/>
    </reaction>
</comment>
<comment type="pathway">
    <text evidence="1">Cell wall biogenesis; peptidoglycan biosynthesis.</text>
</comment>
<comment type="subcellular location">
    <subcellularLocation>
        <location evidence="1">Cytoplasm</location>
    </subcellularLocation>
</comment>
<comment type="similarity">
    <text evidence="1">Belongs to the MurCDEF family.</text>
</comment>
<evidence type="ECO:0000255" key="1">
    <source>
        <dbReference type="HAMAP-Rule" id="MF_00046"/>
    </source>
</evidence>
<evidence type="ECO:0000256" key="2">
    <source>
        <dbReference type="SAM" id="MobiDB-lite"/>
    </source>
</evidence>
<protein>
    <recommendedName>
        <fullName evidence="1">UDP-N-acetylmuramate--L-alanine ligase</fullName>
        <ecNumber evidence="1">6.3.2.8</ecNumber>
    </recommendedName>
    <alternativeName>
        <fullName evidence="1">UDP-N-acetylmuramoyl-L-alanine synthetase</fullName>
    </alternativeName>
</protein>
<sequence>MPQLPMTDSAPLPTPAPSSPAQPSAQPSLHYHLLGIGGIGMSAFARLLATRGHRVSGCDQNLGAQTAGLEAQGIPVAAGHAAAHVTEEPFGKIDVLVASEAVPKSHPELAAARAAGVEVRPRMALLGELLAAGPSVGVIGTHGKTTTTSMIAVAMYGAGLDPSAFVGGNVPEFGGNARTGTGPFVAEVDESDRGFALLGCETAVFTNAEDDHVGGELATYWSTVEEQHAGFARFVAQSGRVLFCADWPGLDTLCSGAREQLTYGQSAGADYRAVNVRPDESGTTFDVEFRGERLGEARVSLPGTHNVLNGLAALAVTHLYGGDFDRAARALADFHGPGRRWEIKGERGGALVVDDYAHNATKVASAVQAARQTGRRVRVVFQPHRYLRTQQSWPRLADALMDADEVLVLDIAAASETPIEGVHATLITDRMTQGGHPNVHYCPDRAAVVRDLRESAQPGDIIVTMGAGDVYRIAEEVVGGSA</sequence>
<dbReference type="EC" id="6.3.2.8" evidence="1"/>
<dbReference type="EMBL" id="AE000513">
    <property type="protein sequence ID" value="AAF10205.1"/>
    <property type="molecule type" value="Genomic_DNA"/>
</dbReference>
<dbReference type="PIR" id="H75496">
    <property type="entry name" value="H75496"/>
</dbReference>
<dbReference type="RefSeq" id="NP_294350.1">
    <property type="nucleotide sequence ID" value="NC_001263.1"/>
</dbReference>
<dbReference type="RefSeq" id="WP_010887272.1">
    <property type="nucleotide sequence ID" value="NC_001263.1"/>
</dbReference>
<dbReference type="SMR" id="Q9RWN9"/>
<dbReference type="FunCoup" id="Q9RWN9">
    <property type="interactions" value="288"/>
</dbReference>
<dbReference type="STRING" id="243230.DR_0627"/>
<dbReference type="PaxDb" id="243230-DR_0627"/>
<dbReference type="EnsemblBacteria" id="AAF10205">
    <property type="protein sequence ID" value="AAF10205"/>
    <property type="gene ID" value="DR_0627"/>
</dbReference>
<dbReference type="GeneID" id="69516873"/>
<dbReference type="KEGG" id="dra:DR_0627"/>
<dbReference type="PATRIC" id="fig|243230.17.peg.806"/>
<dbReference type="eggNOG" id="COG0773">
    <property type="taxonomic scope" value="Bacteria"/>
</dbReference>
<dbReference type="HOGENOM" id="CLU_028104_2_2_0"/>
<dbReference type="InParanoid" id="Q9RWN9"/>
<dbReference type="OrthoDB" id="9804126at2"/>
<dbReference type="UniPathway" id="UPA00219"/>
<dbReference type="Proteomes" id="UP000002524">
    <property type="component" value="Chromosome 1"/>
</dbReference>
<dbReference type="GO" id="GO:0005737">
    <property type="term" value="C:cytoplasm"/>
    <property type="evidence" value="ECO:0007669"/>
    <property type="project" value="UniProtKB-SubCell"/>
</dbReference>
<dbReference type="GO" id="GO:0005524">
    <property type="term" value="F:ATP binding"/>
    <property type="evidence" value="ECO:0007669"/>
    <property type="project" value="UniProtKB-UniRule"/>
</dbReference>
<dbReference type="GO" id="GO:0008763">
    <property type="term" value="F:UDP-N-acetylmuramate-L-alanine ligase activity"/>
    <property type="evidence" value="ECO:0007669"/>
    <property type="project" value="UniProtKB-UniRule"/>
</dbReference>
<dbReference type="GO" id="GO:0051301">
    <property type="term" value="P:cell division"/>
    <property type="evidence" value="ECO:0007669"/>
    <property type="project" value="UniProtKB-KW"/>
</dbReference>
<dbReference type="GO" id="GO:0071555">
    <property type="term" value="P:cell wall organization"/>
    <property type="evidence" value="ECO:0007669"/>
    <property type="project" value="UniProtKB-KW"/>
</dbReference>
<dbReference type="GO" id="GO:0009252">
    <property type="term" value="P:peptidoglycan biosynthetic process"/>
    <property type="evidence" value="ECO:0007669"/>
    <property type="project" value="UniProtKB-UniRule"/>
</dbReference>
<dbReference type="GO" id="GO:0008360">
    <property type="term" value="P:regulation of cell shape"/>
    <property type="evidence" value="ECO:0007669"/>
    <property type="project" value="UniProtKB-KW"/>
</dbReference>
<dbReference type="Gene3D" id="3.90.190.20">
    <property type="entry name" value="Mur ligase, C-terminal domain"/>
    <property type="match status" value="1"/>
</dbReference>
<dbReference type="Gene3D" id="3.40.1190.10">
    <property type="entry name" value="Mur-like, catalytic domain"/>
    <property type="match status" value="1"/>
</dbReference>
<dbReference type="Gene3D" id="3.40.50.720">
    <property type="entry name" value="NAD(P)-binding Rossmann-like Domain"/>
    <property type="match status" value="1"/>
</dbReference>
<dbReference type="HAMAP" id="MF_00046">
    <property type="entry name" value="MurC"/>
    <property type="match status" value="1"/>
</dbReference>
<dbReference type="InterPro" id="IPR036565">
    <property type="entry name" value="Mur-like_cat_sf"/>
</dbReference>
<dbReference type="InterPro" id="IPR004101">
    <property type="entry name" value="Mur_ligase_C"/>
</dbReference>
<dbReference type="InterPro" id="IPR036615">
    <property type="entry name" value="Mur_ligase_C_dom_sf"/>
</dbReference>
<dbReference type="InterPro" id="IPR013221">
    <property type="entry name" value="Mur_ligase_cen"/>
</dbReference>
<dbReference type="InterPro" id="IPR000713">
    <property type="entry name" value="Mur_ligase_N"/>
</dbReference>
<dbReference type="InterPro" id="IPR050061">
    <property type="entry name" value="MurCDEF_pg_biosynth"/>
</dbReference>
<dbReference type="InterPro" id="IPR005758">
    <property type="entry name" value="UDP-N-AcMur_Ala_ligase_MurC"/>
</dbReference>
<dbReference type="NCBIfam" id="TIGR01082">
    <property type="entry name" value="murC"/>
    <property type="match status" value="1"/>
</dbReference>
<dbReference type="PANTHER" id="PTHR43445:SF3">
    <property type="entry name" value="UDP-N-ACETYLMURAMATE--L-ALANINE LIGASE"/>
    <property type="match status" value="1"/>
</dbReference>
<dbReference type="PANTHER" id="PTHR43445">
    <property type="entry name" value="UDP-N-ACETYLMURAMATE--L-ALANINE LIGASE-RELATED"/>
    <property type="match status" value="1"/>
</dbReference>
<dbReference type="Pfam" id="PF01225">
    <property type="entry name" value="Mur_ligase"/>
    <property type="match status" value="1"/>
</dbReference>
<dbReference type="Pfam" id="PF02875">
    <property type="entry name" value="Mur_ligase_C"/>
    <property type="match status" value="1"/>
</dbReference>
<dbReference type="Pfam" id="PF08245">
    <property type="entry name" value="Mur_ligase_M"/>
    <property type="match status" value="1"/>
</dbReference>
<dbReference type="SUPFAM" id="SSF51984">
    <property type="entry name" value="MurCD N-terminal domain"/>
    <property type="match status" value="1"/>
</dbReference>
<dbReference type="SUPFAM" id="SSF53623">
    <property type="entry name" value="MurD-like peptide ligases, catalytic domain"/>
    <property type="match status" value="1"/>
</dbReference>
<dbReference type="SUPFAM" id="SSF53244">
    <property type="entry name" value="MurD-like peptide ligases, peptide-binding domain"/>
    <property type="match status" value="1"/>
</dbReference>
<feature type="chain" id="PRO_0000182086" description="UDP-N-acetylmuramate--L-alanine ligase">
    <location>
        <begin position="1"/>
        <end position="482"/>
    </location>
</feature>
<feature type="region of interest" description="Disordered" evidence="2">
    <location>
        <begin position="1"/>
        <end position="26"/>
    </location>
</feature>
<feature type="binding site" evidence="1">
    <location>
        <begin position="140"/>
        <end position="146"/>
    </location>
    <ligand>
        <name>ATP</name>
        <dbReference type="ChEBI" id="CHEBI:30616"/>
    </ligand>
</feature>
<proteinExistence type="inferred from homology"/>
<keyword id="KW-0067">ATP-binding</keyword>
<keyword id="KW-0131">Cell cycle</keyword>
<keyword id="KW-0132">Cell division</keyword>
<keyword id="KW-0133">Cell shape</keyword>
<keyword id="KW-0961">Cell wall biogenesis/degradation</keyword>
<keyword id="KW-0963">Cytoplasm</keyword>
<keyword id="KW-0436">Ligase</keyword>
<keyword id="KW-0547">Nucleotide-binding</keyword>
<keyword id="KW-0573">Peptidoglycan synthesis</keyword>
<keyword id="KW-1185">Reference proteome</keyword>
<organism>
    <name type="scientific">Deinococcus radiodurans (strain ATCC 13939 / DSM 20539 / JCM 16871 / CCUG 27074 / LMG 4051 / NBRC 15346 / NCIMB 9279 / VKM B-1422 / R1)</name>
    <dbReference type="NCBI Taxonomy" id="243230"/>
    <lineage>
        <taxon>Bacteria</taxon>
        <taxon>Thermotogati</taxon>
        <taxon>Deinococcota</taxon>
        <taxon>Deinococci</taxon>
        <taxon>Deinococcales</taxon>
        <taxon>Deinococcaceae</taxon>
        <taxon>Deinococcus</taxon>
    </lineage>
</organism>